<comment type="function">
    <text evidence="1">Modulator of macroautophagy that causes accumulation of autophagosomes under basal conditions and enhances autophagic flux (By similarity). Represses cell death and promotes long-term clonogenic survival of cells grown in the absence of glucose in a macroautophagy-independent manner (By similarity). May have some role in extracellular matrix engulfment or growth factor receptor recycling, both of which can modulate cell survival (By similarity).</text>
</comment>
<comment type="subcellular location">
    <subcellularLocation>
        <location evidence="1">Cell membrane</location>
        <topology evidence="1">Multi-pass membrane protein</topology>
    </subcellularLocation>
    <subcellularLocation>
        <location evidence="1">Endosome membrane</location>
        <topology evidence="3">Multi-pass membrane protein</topology>
    </subcellularLocation>
    <subcellularLocation>
        <location evidence="1">Cytoplasmic vesicle</location>
        <location evidence="1">Autophagosome membrane</location>
        <topology evidence="3">Multi-pass membrane protein</topology>
    </subcellularLocation>
    <text evidence="1">Localizes mainly at the plasma membrane where it concentrates at actin-rich focal adhesions (By similarity).</text>
</comment>
<comment type="similarity">
    <text evidence="4">Belongs to the DRAM/TMEM150 family.</text>
</comment>
<dbReference type="EMBL" id="BC151463">
    <property type="protein sequence ID" value="AAI51464.1"/>
    <property type="molecule type" value="mRNA"/>
</dbReference>
<dbReference type="RefSeq" id="NP_001095495.1">
    <property type="nucleotide sequence ID" value="NM_001102025.2"/>
</dbReference>
<dbReference type="RefSeq" id="XP_015313866.1">
    <property type="nucleotide sequence ID" value="XM_015458380.1"/>
</dbReference>
<dbReference type="RefSeq" id="XP_015313867.1">
    <property type="nucleotide sequence ID" value="XM_015458381.1"/>
</dbReference>
<dbReference type="FunCoup" id="A7MBB3">
    <property type="interactions" value="62"/>
</dbReference>
<dbReference type="STRING" id="9913.ENSBTAP00000059601"/>
<dbReference type="GlyCosmos" id="A7MBB3">
    <property type="glycosylation" value="1 site, No reported glycans"/>
</dbReference>
<dbReference type="GlyGen" id="A7MBB3">
    <property type="glycosylation" value="1 site"/>
</dbReference>
<dbReference type="PaxDb" id="9913-ENSBTAP00000049701"/>
<dbReference type="GeneID" id="515527"/>
<dbReference type="KEGG" id="bta:515527"/>
<dbReference type="CTD" id="284417"/>
<dbReference type="VEuPathDB" id="HostDB:ENSBTAG00000022813"/>
<dbReference type="eggNOG" id="KOG4320">
    <property type="taxonomic scope" value="Eukaryota"/>
</dbReference>
<dbReference type="HOGENOM" id="CLU_059992_0_0_1"/>
<dbReference type="InParanoid" id="A7MBB3"/>
<dbReference type="OrthoDB" id="191706at2759"/>
<dbReference type="TreeFam" id="TF314508"/>
<dbReference type="Proteomes" id="UP000009136">
    <property type="component" value="Chromosome 18"/>
</dbReference>
<dbReference type="Bgee" id="ENSBTAG00000022813">
    <property type="expression patterns" value="Expressed in monocyte and 100 other cell types or tissues"/>
</dbReference>
<dbReference type="GO" id="GO:0000421">
    <property type="term" value="C:autophagosome membrane"/>
    <property type="evidence" value="ECO:0007669"/>
    <property type="project" value="UniProtKB-SubCell"/>
</dbReference>
<dbReference type="GO" id="GO:0010008">
    <property type="term" value="C:endosome membrane"/>
    <property type="evidence" value="ECO:0007669"/>
    <property type="project" value="UniProtKB-SubCell"/>
</dbReference>
<dbReference type="GO" id="GO:0005886">
    <property type="term" value="C:plasma membrane"/>
    <property type="evidence" value="ECO:0000250"/>
    <property type="project" value="UniProtKB"/>
</dbReference>
<dbReference type="GO" id="GO:0006914">
    <property type="term" value="P:autophagy"/>
    <property type="evidence" value="ECO:0007669"/>
    <property type="project" value="UniProtKB-KW"/>
</dbReference>
<dbReference type="InterPro" id="IPR050911">
    <property type="entry name" value="DRAM/TMEM150_Autophagy_Mod"/>
</dbReference>
<dbReference type="InterPro" id="IPR019402">
    <property type="entry name" value="Frag1/DRAM/Sfk1"/>
</dbReference>
<dbReference type="PANTHER" id="PTHR21324">
    <property type="entry name" value="FASTING-INDUCIBLE INTEGRAL MEMBRANE PROTEIN TM6P1-RELATED"/>
    <property type="match status" value="1"/>
</dbReference>
<dbReference type="PANTHER" id="PTHR21324:SF3">
    <property type="entry name" value="MODULATOR OF MACROAUTOPHAGY TMEM150B"/>
    <property type="match status" value="1"/>
</dbReference>
<dbReference type="Pfam" id="PF10277">
    <property type="entry name" value="Frag1"/>
    <property type="match status" value="1"/>
</dbReference>
<name>T150B_BOVIN</name>
<accession>A7MBB3</accession>
<keyword id="KW-0072">Autophagy</keyword>
<keyword id="KW-1003">Cell membrane</keyword>
<keyword id="KW-0968">Cytoplasmic vesicle</keyword>
<keyword id="KW-0967">Endosome</keyword>
<keyword id="KW-0325">Glycoprotein</keyword>
<keyword id="KW-0472">Membrane</keyword>
<keyword id="KW-1185">Reference proteome</keyword>
<keyword id="KW-0812">Transmembrane</keyword>
<keyword id="KW-1133">Transmembrane helix</keyword>
<reference key="1">
    <citation type="submission" date="2007-07" db="EMBL/GenBank/DDBJ databases">
        <authorList>
            <consortium name="NIH - Mammalian Gene Collection (MGC) project"/>
        </authorList>
    </citation>
    <scope>NUCLEOTIDE SEQUENCE [LARGE SCALE MRNA]</scope>
    <source>
        <strain>Hereford</strain>
        <tissue>Fetal liver</tissue>
    </source>
</reference>
<gene>
    <name evidence="1" type="primary">TMEM150B</name>
</gene>
<protein>
    <recommendedName>
        <fullName evidence="4">Modulator of macroautophagy TMEM150B</fullName>
    </recommendedName>
    <alternativeName>
        <fullName evidence="1">Transmembrane protein 150B</fullName>
    </alternativeName>
</protein>
<sequence length="235" mass="26159">MWGYLSLLPMCLAFWAIAGIWTVFSLAVVNKAVNLTDGFPYISVCGNVPPQSCIFSQVLNIGAASAAWICILRYYQLRDWGVRKWHNQVILWTGLLCALGTSIVGNFQEKNQRATHLTGAFLAFFVGIVYFWLQLFLSWRMKNLPQPGAPWIGPLRLVLCSACFILEVAMVVLHSWSMRSVSAICEWVAAMLLFILFGLLAVDFSRLDSCTLCLQPGSGSLRPPPDSPTSLHVQL</sequence>
<evidence type="ECO:0000250" key="1">
    <source>
        <dbReference type="UniProtKB" id="A6NC51"/>
    </source>
</evidence>
<evidence type="ECO:0000250" key="2">
    <source>
        <dbReference type="UniProtKB" id="Q86TG1"/>
    </source>
</evidence>
<evidence type="ECO:0000255" key="3"/>
<evidence type="ECO:0000305" key="4"/>
<proteinExistence type="evidence at transcript level"/>
<organism>
    <name type="scientific">Bos taurus</name>
    <name type="common">Bovine</name>
    <dbReference type="NCBI Taxonomy" id="9913"/>
    <lineage>
        <taxon>Eukaryota</taxon>
        <taxon>Metazoa</taxon>
        <taxon>Chordata</taxon>
        <taxon>Craniata</taxon>
        <taxon>Vertebrata</taxon>
        <taxon>Euteleostomi</taxon>
        <taxon>Mammalia</taxon>
        <taxon>Eutheria</taxon>
        <taxon>Laurasiatheria</taxon>
        <taxon>Artiodactyla</taxon>
        <taxon>Ruminantia</taxon>
        <taxon>Pecora</taxon>
        <taxon>Bovidae</taxon>
        <taxon>Bovinae</taxon>
        <taxon>Bos</taxon>
    </lineage>
</organism>
<feature type="chain" id="PRO_0000349283" description="Modulator of macroautophagy TMEM150B">
    <location>
        <begin position="1"/>
        <end position="235"/>
    </location>
</feature>
<feature type="topological domain" description="Cytoplasmic" evidence="4">
    <location>
        <begin position="1"/>
        <end position="8"/>
    </location>
</feature>
<feature type="transmembrane region" description="Helical" evidence="3">
    <location>
        <begin position="9"/>
        <end position="29"/>
    </location>
</feature>
<feature type="topological domain" description="Extracellular" evidence="4">
    <location>
        <begin position="30"/>
        <end position="51"/>
    </location>
</feature>
<feature type="transmembrane region" description="Helical" evidence="3">
    <location>
        <begin position="52"/>
        <end position="72"/>
    </location>
</feature>
<feature type="topological domain" description="Cytoplasmic" evidence="4">
    <location>
        <begin position="73"/>
        <end position="88"/>
    </location>
</feature>
<feature type="transmembrane region" description="Helical" evidence="3">
    <location>
        <begin position="89"/>
        <end position="109"/>
    </location>
</feature>
<feature type="topological domain" description="Extracellular" evidence="4">
    <location>
        <begin position="110"/>
        <end position="116"/>
    </location>
</feature>
<feature type="transmembrane region" description="Helical" evidence="3">
    <location>
        <begin position="117"/>
        <end position="137"/>
    </location>
</feature>
<feature type="topological domain" description="Cytoplasmic" evidence="4">
    <location>
        <begin position="138"/>
        <end position="156"/>
    </location>
</feature>
<feature type="transmembrane region" description="Helical" evidence="3">
    <location>
        <begin position="157"/>
        <end position="177"/>
    </location>
</feature>
<feature type="topological domain" description="Extracellular" evidence="4">
    <location>
        <begin position="178"/>
        <end position="180"/>
    </location>
</feature>
<feature type="transmembrane region" description="Helical" evidence="3">
    <location>
        <begin position="181"/>
        <end position="201"/>
    </location>
</feature>
<feature type="topological domain" description="Cytoplasmic" evidence="2">
    <location>
        <begin position="202"/>
        <end position="235"/>
    </location>
</feature>
<feature type="glycosylation site" description="N-linked (GlcNAc...) asparagine" evidence="3">
    <location>
        <position position="34"/>
    </location>
</feature>